<organism>
    <name type="scientific">Oryza sativa subsp. indica</name>
    <name type="common">Rice</name>
    <dbReference type="NCBI Taxonomy" id="39946"/>
    <lineage>
        <taxon>Eukaryota</taxon>
        <taxon>Viridiplantae</taxon>
        <taxon>Streptophyta</taxon>
        <taxon>Embryophyta</taxon>
        <taxon>Tracheophyta</taxon>
        <taxon>Spermatophyta</taxon>
        <taxon>Magnoliopsida</taxon>
        <taxon>Liliopsida</taxon>
        <taxon>Poales</taxon>
        <taxon>Poaceae</taxon>
        <taxon>BOP clade</taxon>
        <taxon>Oryzoideae</taxon>
        <taxon>Oryzeae</taxon>
        <taxon>Oryzinae</taxon>
        <taxon>Oryza</taxon>
        <taxon>Oryza sativa</taxon>
    </lineage>
</organism>
<gene>
    <name type="primary">CHLH</name>
    <name type="ORF">OsI_11362</name>
</gene>
<evidence type="ECO:0000250" key="1"/>
<evidence type="ECO:0000255" key="2"/>
<evidence type="ECO:0000305" key="3"/>
<feature type="transit peptide" description="Chloroplast" evidence="2">
    <location>
        <begin position="1"/>
        <end position="50"/>
    </location>
</feature>
<feature type="chain" id="PRO_0000418767" description="Magnesium-chelatase subunit ChlH, chloroplastic">
    <location>
        <begin position="51"/>
        <end position="1387"/>
    </location>
</feature>
<proteinExistence type="inferred from homology"/>
<accession>B8ANF1</accession>
<dbReference type="EC" id="6.6.1.1"/>
<dbReference type="EMBL" id="CM000128">
    <property type="protein sequence ID" value="EEC75155.1"/>
    <property type="molecule type" value="Genomic_DNA"/>
</dbReference>
<dbReference type="SMR" id="B8ANF1"/>
<dbReference type="STRING" id="39946.B8ANF1"/>
<dbReference type="EnsemblPlants" id="BGIOSGA012530-TA">
    <property type="protein sequence ID" value="BGIOSGA012530-PA"/>
    <property type="gene ID" value="BGIOSGA012530"/>
</dbReference>
<dbReference type="Gramene" id="BGIOSGA012530-TA">
    <property type="protein sequence ID" value="BGIOSGA012530-PA"/>
    <property type="gene ID" value="BGIOSGA012530"/>
</dbReference>
<dbReference type="HOGENOM" id="CLU_002017_1_2_1"/>
<dbReference type="OMA" id="WETGQAM"/>
<dbReference type="UniPathway" id="UPA00668"/>
<dbReference type="Proteomes" id="UP000007015">
    <property type="component" value="Chromosome 3"/>
</dbReference>
<dbReference type="GO" id="GO:0031969">
    <property type="term" value="C:chloroplast membrane"/>
    <property type="evidence" value="ECO:0007669"/>
    <property type="project" value="UniProtKB-SubCell"/>
</dbReference>
<dbReference type="GO" id="GO:0009570">
    <property type="term" value="C:chloroplast stroma"/>
    <property type="evidence" value="ECO:0007669"/>
    <property type="project" value="UniProtKB-SubCell"/>
</dbReference>
<dbReference type="GO" id="GO:0005524">
    <property type="term" value="F:ATP binding"/>
    <property type="evidence" value="ECO:0007669"/>
    <property type="project" value="UniProtKB-KW"/>
</dbReference>
<dbReference type="GO" id="GO:0016851">
    <property type="term" value="F:magnesium chelatase activity"/>
    <property type="evidence" value="ECO:0007669"/>
    <property type="project" value="UniProtKB-EC"/>
</dbReference>
<dbReference type="GO" id="GO:0015995">
    <property type="term" value="P:chlorophyll biosynthetic process"/>
    <property type="evidence" value="ECO:0007669"/>
    <property type="project" value="UniProtKB-UniPathway"/>
</dbReference>
<dbReference type="GO" id="GO:0015979">
    <property type="term" value="P:photosynthesis"/>
    <property type="evidence" value="ECO:0007669"/>
    <property type="project" value="UniProtKB-KW"/>
</dbReference>
<dbReference type="CDD" id="cd10150">
    <property type="entry name" value="CobN_like"/>
    <property type="match status" value="1"/>
</dbReference>
<dbReference type="InterPro" id="IPR011771">
    <property type="entry name" value="BchH"/>
</dbReference>
<dbReference type="InterPro" id="IPR003672">
    <property type="entry name" value="CobN/Mg_chltase"/>
</dbReference>
<dbReference type="InterPro" id="IPR022571">
    <property type="entry name" value="Mg_chelatase_H_N"/>
</dbReference>
<dbReference type="NCBIfam" id="TIGR02025">
    <property type="entry name" value="BchH"/>
    <property type="match status" value="1"/>
</dbReference>
<dbReference type="NCBIfam" id="NF009140">
    <property type="entry name" value="PRK12493.1"/>
    <property type="match status" value="1"/>
</dbReference>
<dbReference type="PANTHER" id="PTHR44119">
    <property type="entry name" value="MAGNESIUM-CHELATASE SUBUNIT CHLH, CHLOROPLASTIC"/>
    <property type="match status" value="1"/>
</dbReference>
<dbReference type="PANTHER" id="PTHR44119:SF1">
    <property type="entry name" value="MAGNESIUM-CHELATASE SUBUNIT CHLH, CHLOROPLASTIC"/>
    <property type="match status" value="1"/>
</dbReference>
<dbReference type="Pfam" id="PF02514">
    <property type="entry name" value="CobN-Mg_chel"/>
    <property type="match status" value="1"/>
</dbReference>
<dbReference type="Pfam" id="PF11965">
    <property type="entry name" value="DUF3479"/>
    <property type="match status" value="1"/>
</dbReference>
<comment type="function">
    <text evidence="1">Involved in chlorophyll biosynthesis. Catalyzes the insertion of magnesium ion into protoporphyrin IX to yield Mg-protoporphyrin IX. The reaction takes place in two steps, with an ATP-dependent activation followed by an ATP-dependent chelation step. May be involved in the plastid-to-nucleus retrograde signaling (By similarity).</text>
</comment>
<comment type="catalytic activity">
    <reaction>
        <text>protoporphyrin IX + Mg(2+) + ATP + H2O = Mg-protoporphyrin IX + ADP + phosphate + 3 H(+)</text>
        <dbReference type="Rhea" id="RHEA:13961"/>
        <dbReference type="ChEBI" id="CHEBI:15377"/>
        <dbReference type="ChEBI" id="CHEBI:15378"/>
        <dbReference type="ChEBI" id="CHEBI:18420"/>
        <dbReference type="ChEBI" id="CHEBI:30616"/>
        <dbReference type="ChEBI" id="CHEBI:43474"/>
        <dbReference type="ChEBI" id="CHEBI:57306"/>
        <dbReference type="ChEBI" id="CHEBI:60492"/>
        <dbReference type="ChEBI" id="CHEBI:456216"/>
        <dbReference type="EC" id="6.6.1.1"/>
    </reaction>
</comment>
<comment type="pathway">
    <text>Porphyrin-containing compound metabolism; chlorophyll biosynthesis.</text>
</comment>
<comment type="subunit">
    <text evidence="1">The magnesium chelatase complex is a heterotrimer consisting of subunits CHLI, CHLD and CHLH.</text>
</comment>
<comment type="subcellular location">
    <subcellularLocation>
        <location evidence="1">Plastid</location>
        <location evidence="1">Chloroplast stroma</location>
    </subcellularLocation>
    <subcellularLocation>
        <location evidence="1">Plastid</location>
        <location evidence="1">Chloroplast membrane</location>
        <topology evidence="1">Peripheral membrane protein</topology>
        <orientation evidence="1">Stromal side</orientation>
    </subcellularLocation>
    <subcellularLocation>
        <location evidence="1">Plastid</location>
        <location evidence="1">Chloroplast membrane</location>
        <topology evidence="1">Peripheral membrane protein</topology>
        <orientation evidence="1">Cytoplasmic side</orientation>
    </subcellularLocation>
    <text evidence="1">Predominantly associated with the chloroplast envelope. Spans the chloroplast envelope and its N- and C-termini are exposed to the cytosol (By similarity).</text>
</comment>
<comment type="similarity">
    <text evidence="3">Belongs to the Mg-chelatase subunit H family.</text>
</comment>
<protein>
    <recommendedName>
        <fullName>Magnesium-chelatase subunit ChlH, chloroplastic</fullName>
        <shortName>Mg-chelatase subunit H</shortName>
        <ecNumber>6.6.1.1</ecNumber>
    </recommendedName>
    <alternativeName>
        <fullName>Mg-protoporphyrin IX chelatase subunit ChlH</fullName>
    </alternativeName>
</protein>
<name>CHLH_ORYSI</name>
<sequence>MSSLVSTPFTTATGVQKKLGAPVPLHSFLLSRRQPAAGAGRGRAAAAAIRCAVAGNGLFTQTKPEVRRVVPPEGDASRRGVPRVKVVYVVLEAQYQSSVTAAVRELNADPRRAAGFEVVGYLVEELRDEETYKTFCADLADANVFIGSLIFVEELALKVKDAVEKERDRMDAVLVFPSMPEVMRLNKLGSFSMSQLGQSKSPFFQLFKRKKNSGGFADSMLKLVRTLPKVLKYLPSDKAQDARLYILSLQFWLGGSPDNLQNFLKMIAVSYVPALKGADIKYDDPVLFLDAGIWHPLAPTMYDDVKEYLNWYGTRRDTNDKLKDPNAPVIGLVLQRSHIVTGDDGHYVAVIMELEAKGAKVIPIFAGGLDFSGPTQRYLVDPITGKPFVNAVVSLTGFALVGGPARQDHPKAIAALQKLDVPYIVALPLVFQTTEEWLNSTLGLHPIQVALQVALPELDGGMEPIVFAGRDPRTGKSHALHKRVEQLCTRAIRWAELKRKTKEEKKLAITVFSFPPDKGNVGTAAYLNVFNSIYSVLQDLKKDGYNVEGLPDTAEALIEEVIHDKEAQFNSPNLNVAYRMNVREYQSLTSYASLLEENWGKPPGNLNSDGENLLVYGKQYGNVFIGVQPTFGYEGDPMRLLFSKSASPHHGFAAYYTFVEKIFQADAVLHFGTHGSLEFMPGKQVGMSDACYPDSLIGNIPNIYYYAANNPSEATVAKRRSYANTISYLTPPAENAGLYKGLKQLSELISSYQSLKDTGRGPQIVSSIISTAKQCNLDKDVPLPEEGVELPPNERDLIVGKVYAKIMEIESRLLPCGLHVIGEPPSAIEAVATLVNIASLDRPEDEIYSLPNILAQTVGRNIEDVYRGSDKGILADVELLRQITEASRGAITAFVERTTNNKGQVVDVTNKLSTMLGFGLSEPWVQHLSKTKFIRADREKLRTLFTFLGECLKLIVADNELGSLKLALEGSYVEPGPGGDPIRNPKVLPTGKNIHALDPQAIPTTAALKSAKIVVDRLLERQKVDNGGKYPETIALVLWGTDNIKTYGESLAQVLWMIGVRPVADTFGRVNRVEPVSLEELGRPRIDVVVNCSGVFRDLFINQMNLLDRAVKMVAELDEPEEMNYVRKHAQEQARELGVSLREAATRVFSNASGSYSSNVNLAVENASWTDEKQLQDMYLSRKSFAFDCDAPGAGMREQRKTFELALATADATFQNLDSSEISLTDVSHYFDSDPTKLVQGLRKDGRAPSSYIADTTTANAQVRTLSETVRLDARTKLLNPKWYEGMMKSGYEGVREIEKRLTNTVGWSATSGQVDNWVYEEANATFIEDEAMRKRLMDTNPNSFRKLVQTFLEASGRGYWETSEENLEKLRELYSEVEDKIEGIDR</sequence>
<keyword id="KW-0067">ATP-binding</keyword>
<keyword id="KW-0149">Chlorophyll biosynthesis</keyword>
<keyword id="KW-0150">Chloroplast</keyword>
<keyword id="KW-0436">Ligase</keyword>
<keyword id="KW-0472">Membrane</keyword>
<keyword id="KW-0547">Nucleotide-binding</keyword>
<keyword id="KW-0602">Photosynthesis</keyword>
<keyword id="KW-0934">Plastid</keyword>
<keyword id="KW-1185">Reference proteome</keyword>
<keyword id="KW-0809">Transit peptide</keyword>
<reference key="1">
    <citation type="journal article" date="2005" name="PLoS Biol.">
        <title>The genomes of Oryza sativa: a history of duplications.</title>
        <authorList>
            <person name="Yu J."/>
            <person name="Wang J."/>
            <person name="Lin W."/>
            <person name="Li S."/>
            <person name="Li H."/>
            <person name="Zhou J."/>
            <person name="Ni P."/>
            <person name="Dong W."/>
            <person name="Hu S."/>
            <person name="Zeng C."/>
            <person name="Zhang J."/>
            <person name="Zhang Y."/>
            <person name="Li R."/>
            <person name="Xu Z."/>
            <person name="Li S."/>
            <person name="Li X."/>
            <person name="Zheng H."/>
            <person name="Cong L."/>
            <person name="Lin L."/>
            <person name="Yin J."/>
            <person name="Geng J."/>
            <person name="Li G."/>
            <person name="Shi J."/>
            <person name="Liu J."/>
            <person name="Lv H."/>
            <person name="Li J."/>
            <person name="Wang J."/>
            <person name="Deng Y."/>
            <person name="Ran L."/>
            <person name="Shi X."/>
            <person name="Wang X."/>
            <person name="Wu Q."/>
            <person name="Li C."/>
            <person name="Ren X."/>
            <person name="Wang J."/>
            <person name="Wang X."/>
            <person name="Li D."/>
            <person name="Liu D."/>
            <person name="Zhang X."/>
            <person name="Ji Z."/>
            <person name="Zhao W."/>
            <person name="Sun Y."/>
            <person name="Zhang Z."/>
            <person name="Bao J."/>
            <person name="Han Y."/>
            <person name="Dong L."/>
            <person name="Ji J."/>
            <person name="Chen P."/>
            <person name="Wu S."/>
            <person name="Liu J."/>
            <person name="Xiao Y."/>
            <person name="Bu D."/>
            <person name="Tan J."/>
            <person name="Yang L."/>
            <person name="Ye C."/>
            <person name="Zhang J."/>
            <person name="Xu J."/>
            <person name="Zhou Y."/>
            <person name="Yu Y."/>
            <person name="Zhang B."/>
            <person name="Zhuang S."/>
            <person name="Wei H."/>
            <person name="Liu B."/>
            <person name="Lei M."/>
            <person name="Yu H."/>
            <person name="Li Y."/>
            <person name="Xu H."/>
            <person name="Wei S."/>
            <person name="He X."/>
            <person name="Fang L."/>
            <person name="Zhang Z."/>
            <person name="Zhang Y."/>
            <person name="Huang X."/>
            <person name="Su Z."/>
            <person name="Tong W."/>
            <person name="Li J."/>
            <person name="Tong Z."/>
            <person name="Li S."/>
            <person name="Ye J."/>
            <person name="Wang L."/>
            <person name="Fang L."/>
            <person name="Lei T."/>
            <person name="Chen C.-S."/>
            <person name="Chen H.-C."/>
            <person name="Xu Z."/>
            <person name="Li H."/>
            <person name="Huang H."/>
            <person name="Zhang F."/>
            <person name="Xu H."/>
            <person name="Li N."/>
            <person name="Zhao C."/>
            <person name="Li S."/>
            <person name="Dong L."/>
            <person name="Huang Y."/>
            <person name="Li L."/>
            <person name="Xi Y."/>
            <person name="Qi Q."/>
            <person name="Li W."/>
            <person name="Zhang B."/>
            <person name="Hu W."/>
            <person name="Zhang Y."/>
            <person name="Tian X."/>
            <person name="Jiao Y."/>
            <person name="Liang X."/>
            <person name="Jin J."/>
            <person name="Gao L."/>
            <person name="Zheng W."/>
            <person name="Hao B."/>
            <person name="Liu S.-M."/>
            <person name="Wang W."/>
            <person name="Yuan L."/>
            <person name="Cao M."/>
            <person name="McDermott J."/>
            <person name="Samudrala R."/>
            <person name="Wang J."/>
            <person name="Wong G.K.-S."/>
            <person name="Yang H."/>
        </authorList>
    </citation>
    <scope>NUCLEOTIDE SEQUENCE [LARGE SCALE GENOMIC DNA]</scope>
    <source>
        <strain>cv. 93-11</strain>
    </source>
</reference>